<evidence type="ECO:0000255" key="1">
    <source>
        <dbReference type="HAMAP-Rule" id="MF_01382"/>
    </source>
</evidence>
<evidence type="ECO:0000269" key="2">
    <source>
    </source>
</evidence>
<evidence type="ECO:0000305" key="3"/>
<proteinExistence type="evidence at protein level"/>
<comment type="function">
    <text evidence="1">Part of the Sec protein translocase complex. Interacts with the SecYEG preprotein conducting channel. Has a central role in coupling the hydrolysis of ATP to the transfer of proteins into and across the cell membrane, serving as an ATP-driven molecular motor driving the stepwise translocation of polypeptide chains across the membrane.</text>
</comment>
<comment type="catalytic activity">
    <reaction evidence="1">
        <text>ATP + H2O + cellular proteinSide 1 = ADP + phosphate + cellular proteinSide 2.</text>
        <dbReference type="EC" id="7.4.2.8"/>
    </reaction>
</comment>
<comment type="subunit">
    <text evidence="1">Monomer and homodimer. Part of the essential Sec protein translocation apparatus which comprises SecA, SecYEG and auxiliary proteins SecDF. Other proteins may also be involved.</text>
</comment>
<comment type="subcellular location">
    <subcellularLocation>
        <location evidence="1">Cell membrane</location>
        <topology evidence="1">Peripheral membrane protein</topology>
        <orientation evidence="1">Cytoplasmic side</orientation>
    </subcellularLocation>
    <subcellularLocation>
        <location evidence="1">Cytoplasm</location>
    </subcellularLocation>
    <text evidence="1">Distribution is 50-50.</text>
</comment>
<comment type="disruption phenotype">
    <text evidence="2">Not essential, the disruption mutant is super-sensitive to azide, export of some proteins is decreased and has a small colony growth phenotype on rich agar medium. It cannot replace secA1.</text>
</comment>
<comment type="similarity">
    <text evidence="1">Belongs to the SecA family.</text>
</comment>
<sequence>MPKTSSAKPGRLSSKFWKLLGASTERNQARSLSEVKGAADFEKKAADLDDEQLTKAAKLLKLEDLAGASDITQFLAIAREAAERTTGLRPFDVQLLAALRMLAGDVVEMATGEGKTLAGAIAAAGYALGGRRVHVITINDYLARRDAEWMGPLLKALGLTVGWITADSTADERREAYQCDVTYASVNEIGFDVLRDQLVTDVADLVSPNPDVALIDEADSVLVDEALVPLVLAGTSHREQPRVEIIRMVGELEAGKHYDTDAESRNVHLTEAGARVMEAKLGGIDLYSEEHVGTTLTEINVALHAHVLLQRDVHYIVRDDAVHLINASRGRIASLQRWPDGLQAAVEAKEGIETTETGEVLDTITVQALINRYPRVCGMTGTALAAGEQLRQFYKLGVSPIPPNTPNIRKDEPDRVYITAAAKIDAIVEHIAEVHKTGQPVLVGTHDVAESEELHEKLLKAGVPAVVLNAKNDAEEAAVIAEAGKLGAVTVSTQMAGRGTDIRLGGSDVGDDDAEKKKVAELGGLHVVGTGRHHTERLDNQLRGRAGRQGDPGSSVFFSSWEDDVVAAHLERSKLPMETDPDAGDGRIIAPRAASLLDHAQRVAEGRLLDVHANTWRYNQLIAQQRAIIVERRETLLRTDTAREELKERSPERYAKLAEELGEDAEERLEKICRLIMLYHLDRGWCEHLAFLADIRESIHLRALGRQNPLDEFHRMAVDAFASLAADAIEAAQQTFETAESVADEPGVDLSKLARPTSTWTYMVHDNPLADDTMSALSLPGVFR</sequence>
<organism>
    <name type="scientific">Mycolicibacterium smegmatis (strain ATCC 700084 / mc(2)155)</name>
    <name type="common">Mycobacterium smegmatis</name>
    <dbReference type="NCBI Taxonomy" id="246196"/>
    <lineage>
        <taxon>Bacteria</taxon>
        <taxon>Bacillati</taxon>
        <taxon>Actinomycetota</taxon>
        <taxon>Actinomycetes</taxon>
        <taxon>Mycobacteriales</taxon>
        <taxon>Mycobacteriaceae</taxon>
        <taxon>Mycolicibacterium</taxon>
    </lineage>
</organism>
<gene>
    <name evidence="1" type="primary">secA2</name>
    <name type="ordered locus">MSMEG_3654</name>
    <name type="ordered locus">MSMEI_3567</name>
</gene>
<name>SECA2_MYCS2</name>
<reference key="1">
    <citation type="journal article" date="2001" name="J. Bacteriol.">
        <title>Two nonredundant SecA homologues function in mycobacteria.</title>
        <authorList>
            <person name="Braunstein M."/>
            <person name="Brown A.M."/>
            <person name="Kurtz S."/>
            <person name="Jacobs W.R. Jr."/>
        </authorList>
    </citation>
    <scope>NUCLEOTIDE SEQUENCE [GENOMIC DNA]</scope>
    <scope>DISRUPTION PHENOTYPE</scope>
    <source>
        <strain>ATCC 700084 / mc(2)155</strain>
    </source>
</reference>
<reference key="2">
    <citation type="submission" date="2006-10" db="EMBL/GenBank/DDBJ databases">
        <authorList>
            <person name="Fleischmann R.D."/>
            <person name="Dodson R.J."/>
            <person name="Haft D.H."/>
            <person name="Merkel J.S."/>
            <person name="Nelson W.C."/>
            <person name="Fraser C.M."/>
        </authorList>
    </citation>
    <scope>NUCLEOTIDE SEQUENCE [LARGE SCALE GENOMIC DNA]</scope>
    <source>
        <strain>ATCC 700084 / mc(2)155</strain>
    </source>
</reference>
<reference key="3">
    <citation type="journal article" date="2007" name="Genome Biol.">
        <title>Interrupted coding sequences in Mycobacterium smegmatis: authentic mutations or sequencing errors?</title>
        <authorList>
            <person name="Deshayes C."/>
            <person name="Perrodou E."/>
            <person name="Gallien S."/>
            <person name="Euphrasie D."/>
            <person name="Schaeffer C."/>
            <person name="Van-Dorsselaer A."/>
            <person name="Poch O."/>
            <person name="Lecompte O."/>
            <person name="Reyrat J.-M."/>
        </authorList>
    </citation>
    <scope>NUCLEOTIDE SEQUENCE [LARGE SCALE GENOMIC DNA]</scope>
    <source>
        <strain>ATCC 700084 / mc(2)155</strain>
    </source>
</reference>
<reference key="4">
    <citation type="journal article" date="2009" name="Genome Res.">
        <title>Ortho-proteogenomics: multiple proteomes investigation through orthology and a new MS-based protocol.</title>
        <authorList>
            <person name="Gallien S."/>
            <person name="Perrodou E."/>
            <person name="Carapito C."/>
            <person name="Deshayes C."/>
            <person name="Reyrat J.-M."/>
            <person name="Van Dorsselaer A."/>
            <person name="Poch O."/>
            <person name="Schaeffer C."/>
            <person name="Lecompte O."/>
        </authorList>
    </citation>
    <scope>NUCLEOTIDE SEQUENCE [LARGE SCALE GENOMIC DNA]</scope>
    <scope>IDENTIFICATION BY MASS SPECTROMETRY [LARGE SCALE ANALYSIS]</scope>
    <source>
        <strain>ATCC 700084 / mc(2)155</strain>
    </source>
</reference>
<accession>A0QYG9</accession>
<accession>I7FEY4</accession>
<accession>Q9EZL3</accession>
<dbReference type="EC" id="7.4.2.8" evidence="1"/>
<dbReference type="EMBL" id="AF287049">
    <property type="protein sequence ID" value="AAG44890.1"/>
    <property type="molecule type" value="Genomic_DNA"/>
</dbReference>
<dbReference type="EMBL" id="CP000480">
    <property type="protein sequence ID" value="ABK70947.1"/>
    <property type="molecule type" value="Genomic_DNA"/>
</dbReference>
<dbReference type="EMBL" id="CP001663">
    <property type="protein sequence ID" value="AFP40030.1"/>
    <property type="molecule type" value="Genomic_DNA"/>
</dbReference>
<dbReference type="RefSeq" id="WP_011729234.1">
    <property type="nucleotide sequence ID" value="NZ_SIJM01000008.1"/>
</dbReference>
<dbReference type="RefSeq" id="YP_887957.1">
    <property type="nucleotide sequence ID" value="NC_008596.1"/>
</dbReference>
<dbReference type="SMR" id="A0QYG9"/>
<dbReference type="STRING" id="246196.MSMEG_3654"/>
<dbReference type="PaxDb" id="246196-MSMEI_3567"/>
<dbReference type="GeneID" id="93458407"/>
<dbReference type="KEGG" id="msb:LJ00_18165"/>
<dbReference type="KEGG" id="msg:MSMEI_3567"/>
<dbReference type="KEGG" id="msm:MSMEG_3654"/>
<dbReference type="PATRIC" id="fig|246196.19.peg.3601"/>
<dbReference type="eggNOG" id="COG0653">
    <property type="taxonomic scope" value="Bacteria"/>
</dbReference>
<dbReference type="OrthoDB" id="9805579at2"/>
<dbReference type="BRENDA" id="7.4.2.5">
    <property type="organism ID" value="3445"/>
</dbReference>
<dbReference type="Proteomes" id="UP000000757">
    <property type="component" value="Chromosome"/>
</dbReference>
<dbReference type="Proteomes" id="UP000006158">
    <property type="component" value="Chromosome"/>
</dbReference>
<dbReference type="GO" id="GO:0031522">
    <property type="term" value="C:cell envelope Sec protein transport complex"/>
    <property type="evidence" value="ECO:0007669"/>
    <property type="project" value="TreeGrafter"/>
</dbReference>
<dbReference type="GO" id="GO:0005829">
    <property type="term" value="C:cytosol"/>
    <property type="evidence" value="ECO:0007669"/>
    <property type="project" value="TreeGrafter"/>
</dbReference>
<dbReference type="GO" id="GO:0005886">
    <property type="term" value="C:plasma membrane"/>
    <property type="evidence" value="ECO:0007669"/>
    <property type="project" value="UniProtKB-SubCell"/>
</dbReference>
<dbReference type="GO" id="GO:0005524">
    <property type="term" value="F:ATP binding"/>
    <property type="evidence" value="ECO:0007669"/>
    <property type="project" value="UniProtKB-UniRule"/>
</dbReference>
<dbReference type="GO" id="GO:0008564">
    <property type="term" value="F:protein-exporting ATPase activity"/>
    <property type="evidence" value="ECO:0007669"/>
    <property type="project" value="UniProtKB-EC"/>
</dbReference>
<dbReference type="GO" id="GO:0065002">
    <property type="term" value="P:intracellular protein transmembrane transport"/>
    <property type="evidence" value="ECO:0007669"/>
    <property type="project" value="UniProtKB-UniRule"/>
</dbReference>
<dbReference type="GO" id="GO:0017038">
    <property type="term" value="P:protein import"/>
    <property type="evidence" value="ECO:0007669"/>
    <property type="project" value="InterPro"/>
</dbReference>
<dbReference type="GO" id="GO:0006605">
    <property type="term" value="P:protein targeting"/>
    <property type="evidence" value="ECO:0007669"/>
    <property type="project" value="UniProtKB-UniRule"/>
</dbReference>
<dbReference type="GO" id="GO:0043952">
    <property type="term" value="P:protein transport by the Sec complex"/>
    <property type="evidence" value="ECO:0007669"/>
    <property type="project" value="TreeGrafter"/>
</dbReference>
<dbReference type="CDD" id="cd17928">
    <property type="entry name" value="DEXDc_SecA"/>
    <property type="match status" value="1"/>
</dbReference>
<dbReference type="CDD" id="cd18803">
    <property type="entry name" value="SF2_C_secA"/>
    <property type="match status" value="1"/>
</dbReference>
<dbReference type="FunFam" id="3.40.50.300:FF:000113">
    <property type="entry name" value="Preprotein translocase subunit SecA"/>
    <property type="match status" value="1"/>
</dbReference>
<dbReference type="Gene3D" id="1.10.3060.10">
    <property type="entry name" value="Helical scaffold and wing domains of SecA"/>
    <property type="match status" value="1"/>
</dbReference>
<dbReference type="Gene3D" id="3.40.50.300">
    <property type="entry name" value="P-loop containing nucleotide triphosphate hydrolases"/>
    <property type="match status" value="3"/>
</dbReference>
<dbReference type="Gene3D" id="3.90.1440.10">
    <property type="entry name" value="SecA, preprotein cross-linking domain"/>
    <property type="match status" value="1"/>
</dbReference>
<dbReference type="HAMAP" id="MF_01382">
    <property type="entry name" value="SecA"/>
    <property type="match status" value="1"/>
</dbReference>
<dbReference type="InterPro" id="IPR014001">
    <property type="entry name" value="Helicase_ATP-bd"/>
</dbReference>
<dbReference type="InterPro" id="IPR001650">
    <property type="entry name" value="Helicase_C-like"/>
</dbReference>
<dbReference type="InterPro" id="IPR027417">
    <property type="entry name" value="P-loop_NTPase"/>
</dbReference>
<dbReference type="InterPro" id="IPR000185">
    <property type="entry name" value="SecA"/>
</dbReference>
<dbReference type="InterPro" id="IPR026389">
    <property type="entry name" value="SecA_Actinobact-type"/>
</dbReference>
<dbReference type="InterPro" id="IPR020937">
    <property type="entry name" value="SecA_CS"/>
</dbReference>
<dbReference type="InterPro" id="IPR011115">
    <property type="entry name" value="SecA_DEAD"/>
</dbReference>
<dbReference type="InterPro" id="IPR014018">
    <property type="entry name" value="SecA_motor_DEAD"/>
</dbReference>
<dbReference type="InterPro" id="IPR011130">
    <property type="entry name" value="SecA_preprotein_X-link_dom"/>
</dbReference>
<dbReference type="InterPro" id="IPR044722">
    <property type="entry name" value="SecA_SF2_C"/>
</dbReference>
<dbReference type="InterPro" id="IPR011116">
    <property type="entry name" value="SecA_Wing/Scaffold"/>
</dbReference>
<dbReference type="InterPro" id="IPR036266">
    <property type="entry name" value="SecA_Wing/Scaffold_sf"/>
</dbReference>
<dbReference type="InterPro" id="IPR036670">
    <property type="entry name" value="SecA_X-link_sf"/>
</dbReference>
<dbReference type="NCBIfam" id="TIGR04221">
    <property type="entry name" value="SecA2_Mycobac"/>
    <property type="match status" value="1"/>
</dbReference>
<dbReference type="PANTHER" id="PTHR30612:SF0">
    <property type="entry name" value="CHLOROPLAST PROTEIN-TRANSPORTING ATPASE"/>
    <property type="match status" value="1"/>
</dbReference>
<dbReference type="PANTHER" id="PTHR30612">
    <property type="entry name" value="SECA INNER MEMBRANE COMPONENT OF SEC PROTEIN SECRETION SYSTEM"/>
    <property type="match status" value="1"/>
</dbReference>
<dbReference type="Pfam" id="PF21090">
    <property type="entry name" value="P-loop_SecA"/>
    <property type="match status" value="2"/>
</dbReference>
<dbReference type="Pfam" id="PF07517">
    <property type="entry name" value="SecA_DEAD"/>
    <property type="match status" value="1"/>
</dbReference>
<dbReference type="Pfam" id="PF01043">
    <property type="entry name" value="SecA_PP_bind"/>
    <property type="match status" value="1"/>
</dbReference>
<dbReference type="Pfam" id="PF07516">
    <property type="entry name" value="SecA_SW"/>
    <property type="match status" value="1"/>
</dbReference>
<dbReference type="PRINTS" id="PR00906">
    <property type="entry name" value="SECA"/>
</dbReference>
<dbReference type="SMART" id="SM00957">
    <property type="entry name" value="SecA_DEAD"/>
    <property type="match status" value="1"/>
</dbReference>
<dbReference type="SMART" id="SM00958">
    <property type="entry name" value="SecA_PP_bind"/>
    <property type="match status" value="1"/>
</dbReference>
<dbReference type="SUPFAM" id="SSF81886">
    <property type="entry name" value="Helical scaffold and wing domains of SecA"/>
    <property type="match status" value="1"/>
</dbReference>
<dbReference type="SUPFAM" id="SSF52540">
    <property type="entry name" value="P-loop containing nucleoside triphosphate hydrolases"/>
    <property type="match status" value="2"/>
</dbReference>
<dbReference type="SUPFAM" id="SSF81767">
    <property type="entry name" value="Pre-protein crosslinking domain of SecA"/>
    <property type="match status" value="1"/>
</dbReference>
<dbReference type="PROSITE" id="PS01312">
    <property type="entry name" value="SECA"/>
    <property type="match status" value="1"/>
</dbReference>
<dbReference type="PROSITE" id="PS51196">
    <property type="entry name" value="SECA_MOTOR_DEAD"/>
    <property type="match status" value="1"/>
</dbReference>
<keyword id="KW-0067">ATP-binding</keyword>
<keyword id="KW-1003">Cell membrane</keyword>
<keyword id="KW-0963">Cytoplasm</keyword>
<keyword id="KW-0472">Membrane</keyword>
<keyword id="KW-0547">Nucleotide-binding</keyword>
<keyword id="KW-0653">Protein transport</keyword>
<keyword id="KW-1185">Reference proteome</keyword>
<keyword id="KW-1278">Translocase</keyword>
<keyword id="KW-0811">Translocation</keyword>
<keyword id="KW-0813">Transport</keyword>
<feature type="chain" id="PRO_0000318382" description="Protein translocase subunit SecA 2">
    <location>
        <begin position="1"/>
        <end position="784"/>
    </location>
</feature>
<feature type="binding site" evidence="1">
    <location>
        <position position="94"/>
    </location>
    <ligand>
        <name>ATP</name>
        <dbReference type="ChEBI" id="CHEBI:30616"/>
    </ligand>
</feature>
<feature type="binding site" evidence="1">
    <location>
        <begin position="112"/>
        <end position="116"/>
    </location>
    <ligand>
        <name>ATP</name>
        <dbReference type="ChEBI" id="CHEBI:30616"/>
    </ligand>
</feature>
<feature type="binding site" evidence="1">
    <location>
        <position position="501"/>
    </location>
    <ligand>
        <name>ATP</name>
        <dbReference type="ChEBI" id="CHEBI:30616"/>
    </ligand>
</feature>
<feature type="sequence conflict" description="In Ref. 1; AAG44890." evidence="3" ref="1">
    <original>M</original>
    <variation>MANESWRTSAYRKRV</variation>
    <location>
        <position position="1"/>
    </location>
</feature>
<protein>
    <recommendedName>
        <fullName evidence="1">Protein translocase subunit SecA 2</fullName>
        <ecNumber evidence="1">7.4.2.8</ecNumber>
    </recommendedName>
</protein>